<protein>
    <recommendedName>
        <fullName evidence="1">Small ribosomal subunit protein uS3</fullName>
    </recommendedName>
    <alternativeName>
        <fullName evidence="3">30S ribosomal protein S3</fullName>
    </alternativeName>
</protein>
<feature type="chain" id="PRO_0000130086" description="Small ribosomal subunit protein uS3">
    <location>
        <begin position="1"/>
        <end position="236"/>
    </location>
</feature>
<feature type="domain" description="KH type-2" evidence="1">
    <location>
        <begin position="39"/>
        <end position="107"/>
    </location>
</feature>
<feature type="region of interest" description="Disordered" evidence="2">
    <location>
        <begin position="214"/>
        <end position="236"/>
    </location>
</feature>
<name>RS3_BRUSU</name>
<proteinExistence type="inferred from homology"/>
<sequence>MGQKINPIGLRLGINRTWDSRWYANTGEYGKLLHEDVKIREFLTEELKQAAISKIVIERPHKKCRVTIHSARPGIIIGKKGADIEKLRKKLSEMTNADTSLNIVEVRKPEVDATLIAQSIAQQLERRVAFRRAMKRAVQSAMRLGAEGIRINCSGRLGGAEIARMEWYREGRVPLHTLRADIDYGTAEAKTAYGICGVKVWVFKGEILEHDPMASERRAVEGDNQGSSSNRRRENA</sequence>
<evidence type="ECO:0000255" key="1">
    <source>
        <dbReference type="HAMAP-Rule" id="MF_01309"/>
    </source>
</evidence>
<evidence type="ECO:0000256" key="2">
    <source>
        <dbReference type="SAM" id="MobiDB-lite"/>
    </source>
</evidence>
<evidence type="ECO:0000305" key="3"/>
<reference key="1">
    <citation type="journal article" date="2002" name="Proc. Natl. Acad. Sci. U.S.A.">
        <title>The Brucella suis genome reveals fundamental similarities between animal and plant pathogens and symbionts.</title>
        <authorList>
            <person name="Paulsen I.T."/>
            <person name="Seshadri R."/>
            <person name="Nelson K.E."/>
            <person name="Eisen J.A."/>
            <person name="Heidelberg J.F."/>
            <person name="Read T.D."/>
            <person name="Dodson R.J."/>
            <person name="Umayam L.A."/>
            <person name="Brinkac L.M."/>
            <person name="Beanan M.J."/>
            <person name="Daugherty S.C."/>
            <person name="DeBoy R.T."/>
            <person name="Durkin A.S."/>
            <person name="Kolonay J.F."/>
            <person name="Madupu R."/>
            <person name="Nelson W.C."/>
            <person name="Ayodeji B."/>
            <person name="Kraul M."/>
            <person name="Shetty J."/>
            <person name="Malek J.A."/>
            <person name="Van Aken S.E."/>
            <person name="Riedmuller S."/>
            <person name="Tettelin H."/>
            <person name="Gill S.R."/>
            <person name="White O."/>
            <person name="Salzberg S.L."/>
            <person name="Hoover D.L."/>
            <person name="Lindler L.E."/>
            <person name="Halling S.M."/>
            <person name="Boyle S.M."/>
            <person name="Fraser C.M."/>
        </authorList>
    </citation>
    <scope>NUCLEOTIDE SEQUENCE [LARGE SCALE GENOMIC DNA]</scope>
    <source>
        <strain>1330</strain>
    </source>
</reference>
<reference key="2">
    <citation type="journal article" date="2011" name="J. Bacteriol.">
        <title>Revised genome sequence of Brucella suis 1330.</title>
        <authorList>
            <person name="Tae H."/>
            <person name="Shallom S."/>
            <person name="Settlage R."/>
            <person name="Preston D."/>
            <person name="Adams L.G."/>
            <person name="Garner H.R."/>
        </authorList>
    </citation>
    <scope>NUCLEOTIDE SEQUENCE [LARGE SCALE GENOMIC DNA]</scope>
    <source>
        <strain>1330</strain>
    </source>
</reference>
<comment type="function">
    <text evidence="1">Binds the lower part of the 30S subunit head. Binds mRNA in the 70S ribosome, positioning it for translation.</text>
</comment>
<comment type="subunit">
    <text evidence="1">Part of the 30S ribosomal subunit. Forms a tight complex with proteins S10 and S14.</text>
</comment>
<comment type="similarity">
    <text evidence="1">Belongs to the universal ribosomal protein uS3 family.</text>
</comment>
<gene>
    <name evidence="1" type="primary">rpsC</name>
    <name type="ordered locus">BR1227</name>
    <name type="ordered locus">BS1330_I1223</name>
</gene>
<accession>P59180</accession>
<accession>G0KAE8</accession>
<organism>
    <name type="scientific">Brucella suis biovar 1 (strain 1330)</name>
    <dbReference type="NCBI Taxonomy" id="204722"/>
    <lineage>
        <taxon>Bacteria</taxon>
        <taxon>Pseudomonadati</taxon>
        <taxon>Pseudomonadota</taxon>
        <taxon>Alphaproteobacteria</taxon>
        <taxon>Hyphomicrobiales</taxon>
        <taxon>Brucellaceae</taxon>
        <taxon>Brucella/Ochrobactrum group</taxon>
        <taxon>Brucella</taxon>
    </lineage>
</organism>
<keyword id="KW-0687">Ribonucleoprotein</keyword>
<keyword id="KW-0689">Ribosomal protein</keyword>
<keyword id="KW-0694">RNA-binding</keyword>
<keyword id="KW-0699">rRNA-binding</keyword>
<dbReference type="EMBL" id="AE014291">
    <property type="protein sequence ID" value="AAN30146.1"/>
    <property type="molecule type" value="Genomic_DNA"/>
</dbReference>
<dbReference type="EMBL" id="CP002997">
    <property type="protein sequence ID" value="AEM18564.1"/>
    <property type="molecule type" value="Genomic_DNA"/>
</dbReference>
<dbReference type="RefSeq" id="WP_002964356.1">
    <property type="nucleotide sequence ID" value="NZ_KN046804.1"/>
</dbReference>
<dbReference type="SMR" id="P59180"/>
<dbReference type="GeneID" id="97533530"/>
<dbReference type="KEGG" id="bms:BR1227"/>
<dbReference type="KEGG" id="bsi:BS1330_I1223"/>
<dbReference type="PATRIC" id="fig|204722.21.peg.2249"/>
<dbReference type="HOGENOM" id="CLU_058591_0_2_5"/>
<dbReference type="PhylomeDB" id="P59180"/>
<dbReference type="Proteomes" id="UP000007104">
    <property type="component" value="Chromosome I"/>
</dbReference>
<dbReference type="GO" id="GO:0022627">
    <property type="term" value="C:cytosolic small ribosomal subunit"/>
    <property type="evidence" value="ECO:0007669"/>
    <property type="project" value="TreeGrafter"/>
</dbReference>
<dbReference type="GO" id="GO:0003729">
    <property type="term" value="F:mRNA binding"/>
    <property type="evidence" value="ECO:0007669"/>
    <property type="project" value="UniProtKB-UniRule"/>
</dbReference>
<dbReference type="GO" id="GO:0019843">
    <property type="term" value="F:rRNA binding"/>
    <property type="evidence" value="ECO:0007669"/>
    <property type="project" value="UniProtKB-UniRule"/>
</dbReference>
<dbReference type="GO" id="GO:0003735">
    <property type="term" value="F:structural constituent of ribosome"/>
    <property type="evidence" value="ECO:0007669"/>
    <property type="project" value="InterPro"/>
</dbReference>
<dbReference type="GO" id="GO:0006412">
    <property type="term" value="P:translation"/>
    <property type="evidence" value="ECO:0007669"/>
    <property type="project" value="UniProtKB-UniRule"/>
</dbReference>
<dbReference type="CDD" id="cd02412">
    <property type="entry name" value="KH-II_30S_S3"/>
    <property type="match status" value="1"/>
</dbReference>
<dbReference type="FunFam" id="3.30.1140.32:FF:000009">
    <property type="entry name" value="30S ribosomal protein S3"/>
    <property type="match status" value="1"/>
</dbReference>
<dbReference type="FunFam" id="3.30.300.20:FF:000001">
    <property type="entry name" value="30S ribosomal protein S3"/>
    <property type="match status" value="1"/>
</dbReference>
<dbReference type="Gene3D" id="3.30.300.20">
    <property type="match status" value="1"/>
</dbReference>
<dbReference type="Gene3D" id="3.30.1140.32">
    <property type="entry name" value="Ribosomal protein S3, C-terminal domain"/>
    <property type="match status" value="1"/>
</dbReference>
<dbReference type="HAMAP" id="MF_01309_B">
    <property type="entry name" value="Ribosomal_uS3_B"/>
    <property type="match status" value="1"/>
</dbReference>
<dbReference type="InterPro" id="IPR004087">
    <property type="entry name" value="KH_dom"/>
</dbReference>
<dbReference type="InterPro" id="IPR015946">
    <property type="entry name" value="KH_dom-like_a/b"/>
</dbReference>
<dbReference type="InterPro" id="IPR004044">
    <property type="entry name" value="KH_dom_type_2"/>
</dbReference>
<dbReference type="InterPro" id="IPR009019">
    <property type="entry name" value="KH_sf_prok-type"/>
</dbReference>
<dbReference type="InterPro" id="IPR036419">
    <property type="entry name" value="Ribosomal_S3_C_sf"/>
</dbReference>
<dbReference type="InterPro" id="IPR005704">
    <property type="entry name" value="Ribosomal_uS3_bac-typ"/>
</dbReference>
<dbReference type="InterPro" id="IPR001351">
    <property type="entry name" value="Ribosomal_uS3_C"/>
</dbReference>
<dbReference type="InterPro" id="IPR018280">
    <property type="entry name" value="Ribosomal_uS3_CS"/>
</dbReference>
<dbReference type="NCBIfam" id="TIGR01009">
    <property type="entry name" value="rpsC_bact"/>
    <property type="match status" value="1"/>
</dbReference>
<dbReference type="PANTHER" id="PTHR11760">
    <property type="entry name" value="30S/40S RIBOSOMAL PROTEIN S3"/>
    <property type="match status" value="1"/>
</dbReference>
<dbReference type="PANTHER" id="PTHR11760:SF19">
    <property type="entry name" value="SMALL RIBOSOMAL SUBUNIT PROTEIN US3C"/>
    <property type="match status" value="1"/>
</dbReference>
<dbReference type="Pfam" id="PF07650">
    <property type="entry name" value="KH_2"/>
    <property type="match status" value="1"/>
</dbReference>
<dbReference type="Pfam" id="PF00189">
    <property type="entry name" value="Ribosomal_S3_C"/>
    <property type="match status" value="1"/>
</dbReference>
<dbReference type="SMART" id="SM00322">
    <property type="entry name" value="KH"/>
    <property type="match status" value="1"/>
</dbReference>
<dbReference type="SUPFAM" id="SSF54814">
    <property type="entry name" value="Prokaryotic type KH domain (KH-domain type II)"/>
    <property type="match status" value="1"/>
</dbReference>
<dbReference type="SUPFAM" id="SSF54821">
    <property type="entry name" value="Ribosomal protein S3 C-terminal domain"/>
    <property type="match status" value="1"/>
</dbReference>
<dbReference type="PROSITE" id="PS50823">
    <property type="entry name" value="KH_TYPE_2"/>
    <property type="match status" value="1"/>
</dbReference>
<dbReference type="PROSITE" id="PS00548">
    <property type="entry name" value="RIBOSOMAL_S3"/>
    <property type="match status" value="1"/>
</dbReference>